<proteinExistence type="inferred from homology"/>
<dbReference type="EC" id="2.2.1.7" evidence="1"/>
<dbReference type="EMBL" id="CP000034">
    <property type="protein sequence ID" value="ABB60529.1"/>
    <property type="molecule type" value="Genomic_DNA"/>
</dbReference>
<dbReference type="RefSeq" id="WP_000006826.1">
    <property type="nucleotide sequence ID" value="NC_007606.1"/>
</dbReference>
<dbReference type="RefSeq" id="YP_402018.1">
    <property type="nucleotide sequence ID" value="NC_007606.1"/>
</dbReference>
<dbReference type="SMR" id="Q32JH8"/>
<dbReference type="STRING" id="300267.SDY_0310"/>
<dbReference type="EnsemblBacteria" id="ABB60529">
    <property type="protein sequence ID" value="ABB60529"/>
    <property type="gene ID" value="SDY_0310"/>
</dbReference>
<dbReference type="KEGG" id="sdy:SDY_0310"/>
<dbReference type="PATRIC" id="fig|300267.13.peg.356"/>
<dbReference type="HOGENOM" id="CLU_009227_1_4_6"/>
<dbReference type="UniPathway" id="UPA00064">
    <property type="reaction ID" value="UER00091"/>
</dbReference>
<dbReference type="Proteomes" id="UP000002716">
    <property type="component" value="Chromosome"/>
</dbReference>
<dbReference type="GO" id="GO:0005829">
    <property type="term" value="C:cytosol"/>
    <property type="evidence" value="ECO:0007669"/>
    <property type="project" value="TreeGrafter"/>
</dbReference>
<dbReference type="GO" id="GO:0008661">
    <property type="term" value="F:1-deoxy-D-xylulose-5-phosphate synthase activity"/>
    <property type="evidence" value="ECO:0007669"/>
    <property type="project" value="UniProtKB-UniRule"/>
</dbReference>
<dbReference type="GO" id="GO:0000287">
    <property type="term" value="F:magnesium ion binding"/>
    <property type="evidence" value="ECO:0007669"/>
    <property type="project" value="UniProtKB-UniRule"/>
</dbReference>
<dbReference type="GO" id="GO:0030976">
    <property type="term" value="F:thiamine pyrophosphate binding"/>
    <property type="evidence" value="ECO:0007669"/>
    <property type="project" value="UniProtKB-UniRule"/>
</dbReference>
<dbReference type="GO" id="GO:0052865">
    <property type="term" value="P:1-deoxy-D-xylulose 5-phosphate biosynthetic process"/>
    <property type="evidence" value="ECO:0007669"/>
    <property type="project" value="UniProtKB-UniPathway"/>
</dbReference>
<dbReference type="GO" id="GO:0019288">
    <property type="term" value="P:isopentenyl diphosphate biosynthetic process, methylerythritol 4-phosphate pathway"/>
    <property type="evidence" value="ECO:0007669"/>
    <property type="project" value="TreeGrafter"/>
</dbReference>
<dbReference type="GO" id="GO:0016114">
    <property type="term" value="P:terpenoid biosynthetic process"/>
    <property type="evidence" value="ECO:0007669"/>
    <property type="project" value="UniProtKB-UniRule"/>
</dbReference>
<dbReference type="GO" id="GO:0009228">
    <property type="term" value="P:thiamine biosynthetic process"/>
    <property type="evidence" value="ECO:0007669"/>
    <property type="project" value="UniProtKB-UniRule"/>
</dbReference>
<dbReference type="CDD" id="cd02007">
    <property type="entry name" value="TPP_DXS"/>
    <property type="match status" value="1"/>
</dbReference>
<dbReference type="CDD" id="cd07033">
    <property type="entry name" value="TPP_PYR_DXS_TK_like"/>
    <property type="match status" value="1"/>
</dbReference>
<dbReference type="FunFam" id="3.40.50.920:FF:000002">
    <property type="entry name" value="1-deoxy-D-xylulose-5-phosphate synthase"/>
    <property type="match status" value="1"/>
</dbReference>
<dbReference type="FunFam" id="3.40.50.970:FF:000005">
    <property type="entry name" value="1-deoxy-D-xylulose-5-phosphate synthase"/>
    <property type="match status" value="1"/>
</dbReference>
<dbReference type="Gene3D" id="3.40.50.920">
    <property type="match status" value="1"/>
</dbReference>
<dbReference type="Gene3D" id="3.40.50.970">
    <property type="match status" value="2"/>
</dbReference>
<dbReference type="HAMAP" id="MF_00315">
    <property type="entry name" value="DXP_synth"/>
    <property type="match status" value="1"/>
</dbReference>
<dbReference type="InterPro" id="IPR005477">
    <property type="entry name" value="Dxylulose-5-P_synthase"/>
</dbReference>
<dbReference type="InterPro" id="IPR029061">
    <property type="entry name" value="THDP-binding"/>
</dbReference>
<dbReference type="InterPro" id="IPR009014">
    <property type="entry name" value="Transketo_C/PFOR_II"/>
</dbReference>
<dbReference type="InterPro" id="IPR005475">
    <property type="entry name" value="Transketolase-like_Pyr-bd"/>
</dbReference>
<dbReference type="InterPro" id="IPR020826">
    <property type="entry name" value="Transketolase_BS"/>
</dbReference>
<dbReference type="InterPro" id="IPR033248">
    <property type="entry name" value="Transketolase_C"/>
</dbReference>
<dbReference type="InterPro" id="IPR049557">
    <property type="entry name" value="Transketolase_CS"/>
</dbReference>
<dbReference type="NCBIfam" id="TIGR00204">
    <property type="entry name" value="dxs"/>
    <property type="match status" value="1"/>
</dbReference>
<dbReference type="NCBIfam" id="NF003933">
    <property type="entry name" value="PRK05444.2-2"/>
    <property type="match status" value="1"/>
</dbReference>
<dbReference type="PANTHER" id="PTHR43322">
    <property type="entry name" value="1-D-DEOXYXYLULOSE 5-PHOSPHATE SYNTHASE-RELATED"/>
    <property type="match status" value="1"/>
</dbReference>
<dbReference type="PANTHER" id="PTHR43322:SF5">
    <property type="entry name" value="1-DEOXY-D-XYLULOSE-5-PHOSPHATE SYNTHASE, CHLOROPLASTIC"/>
    <property type="match status" value="1"/>
</dbReference>
<dbReference type="Pfam" id="PF13292">
    <property type="entry name" value="DXP_synthase_N"/>
    <property type="match status" value="1"/>
</dbReference>
<dbReference type="Pfam" id="PF02779">
    <property type="entry name" value="Transket_pyr"/>
    <property type="match status" value="1"/>
</dbReference>
<dbReference type="Pfam" id="PF02780">
    <property type="entry name" value="Transketolase_C"/>
    <property type="match status" value="1"/>
</dbReference>
<dbReference type="SMART" id="SM00861">
    <property type="entry name" value="Transket_pyr"/>
    <property type="match status" value="1"/>
</dbReference>
<dbReference type="SUPFAM" id="SSF52518">
    <property type="entry name" value="Thiamin diphosphate-binding fold (THDP-binding)"/>
    <property type="match status" value="2"/>
</dbReference>
<dbReference type="SUPFAM" id="SSF52922">
    <property type="entry name" value="TK C-terminal domain-like"/>
    <property type="match status" value="1"/>
</dbReference>
<dbReference type="PROSITE" id="PS00801">
    <property type="entry name" value="TRANSKETOLASE_1"/>
    <property type="match status" value="1"/>
</dbReference>
<dbReference type="PROSITE" id="PS00802">
    <property type="entry name" value="TRANSKETOLASE_2"/>
    <property type="match status" value="1"/>
</dbReference>
<reference key="1">
    <citation type="journal article" date="2005" name="Nucleic Acids Res.">
        <title>Genome dynamics and diversity of Shigella species, the etiologic agents of bacillary dysentery.</title>
        <authorList>
            <person name="Yang F."/>
            <person name="Yang J."/>
            <person name="Zhang X."/>
            <person name="Chen L."/>
            <person name="Jiang Y."/>
            <person name="Yan Y."/>
            <person name="Tang X."/>
            <person name="Wang J."/>
            <person name="Xiong Z."/>
            <person name="Dong J."/>
            <person name="Xue Y."/>
            <person name="Zhu Y."/>
            <person name="Xu X."/>
            <person name="Sun L."/>
            <person name="Chen S."/>
            <person name="Nie H."/>
            <person name="Peng J."/>
            <person name="Xu J."/>
            <person name="Wang Y."/>
            <person name="Yuan Z."/>
            <person name="Wen Y."/>
            <person name="Yao Z."/>
            <person name="Shen Y."/>
            <person name="Qiang B."/>
            <person name="Hou Y."/>
            <person name="Yu J."/>
            <person name="Jin Q."/>
        </authorList>
    </citation>
    <scope>NUCLEOTIDE SEQUENCE [LARGE SCALE GENOMIC DNA]</scope>
    <source>
        <strain>Sd197</strain>
    </source>
</reference>
<organism>
    <name type="scientific">Shigella dysenteriae serotype 1 (strain Sd197)</name>
    <dbReference type="NCBI Taxonomy" id="300267"/>
    <lineage>
        <taxon>Bacteria</taxon>
        <taxon>Pseudomonadati</taxon>
        <taxon>Pseudomonadota</taxon>
        <taxon>Gammaproteobacteria</taxon>
        <taxon>Enterobacterales</taxon>
        <taxon>Enterobacteriaceae</taxon>
        <taxon>Shigella</taxon>
    </lineage>
</organism>
<name>DXS_SHIDS</name>
<protein>
    <recommendedName>
        <fullName evidence="1">1-deoxy-D-xylulose-5-phosphate synthase</fullName>
        <ecNumber evidence="1">2.2.1.7</ecNumber>
    </recommendedName>
    <alternativeName>
        <fullName evidence="1">1-deoxyxylulose-5-phosphate synthase</fullName>
        <shortName evidence="1">DXP synthase</shortName>
        <shortName evidence="1">DXPS</shortName>
    </alternativeName>
</protein>
<keyword id="KW-0414">Isoprene biosynthesis</keyword>
<keyword id="KW-0460">Magnesium</keyword>
<keyword id="KW-0479">Metal-binding</keyword>
<keyword id="KW-1185">Reference proteome</keyword>
<keyword id="KW-0784">Thiamine biosynthesis</keyword>
<keyword id="KW-0786">Thiamine pyrophosphate</keyword>
<keyword id="KW-0808">Transferase</keyword>
<sequence>MSFDIAKYPTLALVDSTQELRLLPKESLPKLCDELRRYLLDSVSRSSGHFASGLGTVELTVALHYVYNTPFDQLIWDVGHQAYPHKILTGRRDKIGTIRQKGGLHPFPWRGESEYDVLSVGHSSTSISAGIGIAVAAEKEGKNRRTVCVIGDGAITAGMAFEAMNHAGDIRPDMLVVLNDNEMSISENVGALNNHLAQLLSGKLYSSLREGGKKVFSGVPPIKELLKRTEEHIKGMVVPGTLFEELGFNYIGPVDGHDVLGLITTLKNMRDLKGPQFLHIMTKKGRGYEPAEKDPITFHAVPKFDPSSGCLPKSSGGLPSYSKIFGDWLCETAAKDNKLMAITPAMREGSGMVEFSRKFPDRYFDVAIAEQHAVTFAAGLAIGGYKPIVAIYSTFLQRAYDQVLHDVAIQKLPVLFAIDRAGIVGADGQTHQGAFDLSYLRCIPEMVIMTPSDENECRQMLYTGYHYNDGPSAVRYPRGNAVGVELTPLEKLPIGKGTVKRRGEKLAILNFGTLMPEAAKVAESLNATLVDMRFVKPLDETLILEMAASHEALVTVEENAIMGGAGSGVNEVLMAHRKPVPVLNIGLPDFFIPQGTQEEMRAELGLDAAGMEAKIKAWLA</sequence>
<feature type="chain" id="PRO_0000256484" description="1-deoxy-D-xylulose-5-phosphate synthase">
    <location>
        <begin position="1"/>
        <end position="620"/>
    </location>
</feature>
<feature type="binding site" evidence="1">
    <location>
        <position position="80"/>
    </location>
    <ligand>
        <name>thiamine diphosphate</name>
        <dbReference type="ChEBI" id="CHEBI:58937"/>
    </ligand>
</feature>
<feature type="binding site" evidence="1">
    <location>
        <begin position="121"/>
        <end position="123"/>
    </location>
    <ligand>
        <name>thiamine diphosphate</name>
        <dbReference type="ChEBI" id="CHEBI:58937"/>
    </ligand>
</feature>
<feature type="binding site" evidence="1">
    <location>
        <position position="152"/>
    </location>
    <ligand>
        <name>Mg(2+)</name>
        <dbReference type="ChEBI" id="CHEBI:18420"/>
    </ligand>
</feature>
<feature type="binding site" evidence="1">
    <location>
        <begin position="153"/>
        <end position="154"/>
    </location>
    <ligand>
        <name>thiamine diphosphate</name>
        <dbReference type="ChEBI" id="CHEBI:58937"/>
    </ligand>
</feature>
<feature type="binding site" evidence="1">
    <location>
        <position position="181"/>
    </location>
    <ligand>
        <name>Mg(2+)</name>
        <dbReference type="ChEBI" id="CHEBI:18420"/>
    </ligand>
</feature>
<feature type="binding site" evidence="1">
    <location>
        <position position="181"/>
    </location>
    <ligand>
        <name>thiamine diphosphate</name>
        <dbReference type="ChEBI" id="CHEBI:58937"/>
    </ligand>
</feature>
<feature type="binding site" evidence="1">
    <location>
        <position position="288"/>
    </location>
    <ligand>
        <name>thiamine diphosphate</name>
        <dbReference type="ChEBI" id="CHEBI:58937"/>
    </ligand>
</feature>
<feature type="binding site" evidence="1">
    <location>
        <position position="370"/>
    </location>
    <ligand>
        <name>thiamine diphosphate</name>
        <dbReference type="ChEBI" id="CHEBI:58937"/>
    </ligand>
</feature>
<accession>Q32JH8</accession>
<evidence type="ECO:0000255" key="1">
    <source>
        <dbReference type="HAMAP-Rule" id="MF_00315"/>
    </source>
</evidence>
<gene>
    <name evidence="1" type="primary">dxs</name>
    <name type="ordered locus">SDY_0310</name>
</gene>
<comment type="function">
    <text evidence="1">Catalyzes the acyloin condensation reaction between C atoms 2 and 3 of pyruvate and glyceraldehyde 3-phosphate to yield 1-deoxy-D-xylulose-5-phosphate (DXP).</text>
</comment>
<comment type="catalytic activity">
    <reaction evidence="1">
        <text>D-glyceraldehyde 3-phosphate + pyruvate + H(+) = 1-deoxy-D-xylulose 5-phosphate + CO2</text>
        <dbReference type="Rhea" id="RHEA:12605"/>
        <dbReference type="ChEBI" id="CHEBI:15361"/>
        <dbReference type="ChEBI" id="CHEBI:15378"/>
        <dbReference type="ChEBI" id="CHEBI:16526"/>
        <dbReference type="ChEBI" id="CHEBI:57792"/>
        <dbReference type="ChEBI" id="CHEBI:59776"/>
        <dbReference type="EC" id="2.2.1.7"/>
    </reaction>
</comment>
<comment type="cofactor">
    <cofactor evidence="1">
        <name>Mg(2+)</name>
        <dbReference type="ChEBI" id="CHEBI:18420"/>
    </cofactor>
    <text evidence="1">Binds 1 Mg(2+) ion per subunit.</text>
</comment>
<comment type="cofactor">
    <cofactor evidence="1">
        <name>thiamine diphosphate</name>
        <dbReference type="ChEBI" id="CHEBI:58937"/>
    </cofactor>
    <text evidence="1">Binds 1 thiamine pyrophosphate per subunit.</text>
</comment>
<comment type="pathway">
    <text evidence="1">Metabolic intermediate biosynthesis; 1-deoxy-D-xylulose 5-phosphate biosynthesis; 1-deoxy-D-xylulose 5-phosphate from D-glyceraldehyde 3-phosphate and pyruvate: step 1/1.</text>
</comment>
<comment type="subunit">
    <text evidence="1">Homodimer.</text>
</comment>
<comment type="similarity">
    <text evidence="1">Belongs to the transketolase family. DXPS subfamily.</text>
</comment>